<reference key="1">
    <citation type="journal article" date="2002" name="Environ. Microbiol.">
        <title>Complete genome sequence and comparative analysis of the metabolically versatile Pseudomonas putida KT2440.</title>
        <authorList>
            <person name="Nelson K.E."/>
            <person name="Weinel C."/>
            <person name="Paulsen I.T."/>
            <person name="Dodson R.J."/>
            <person name="Hilbert H."/>
            <person name="Martins dos Santos V.A.P."/>
            <person name="Fouts D.E."/>
            <person name="Gill S.R."/>
            <person name="Pop M."/>
            <person name="Holmes M."/>
            <person name="Brinkac L.M."/>
            <person name="Beanan M.J."/>
            <person name="DeBoy R.T."/>
            <person name="Daugherty S.C."/>
            <person name="Kolonay J.F."/>
            <person name="Madupu R."/>
            <person name="Nelson W.C."/>
            <person name="White O."/>
            <person name="Peterson J.D."/>
            <person name="Khouri H.M."/>
            <person name="Hance I."/>
            <person name="Chris Lee P."/>
            <person name="Holtzapple E.K."/>
            <person name="Scanlan D."/>
            <person name="Tran K."/>
            <person name="Moazzez A."/>
            <person name="Utterback T.R."/>
            <person name="Rizzo M."/>
            <person name="Lee K."/>
            <person name="Kosack D."/>
            <person name="Moestl D."/>
            <person name="Wedler H."/>
            <person name="Lauber J."/>
            <person name="Stjepandic D."/>
            <person name="Hoheisel J."/>
            <person name="Straetz M."/>
            <person name="Heim S."/>
            <person name="Kiewitz C."/>
            <person name="Eisen J.A."/>
            <person name="Timmis K.N."/>
            <person name="Duesterhoeft A."/>
            <person name="Tuemmler B."/>
            <person name="Fraser C.M."/>
        </authorList>
    </citation>
    <scope>NUCLEOTIDE SEQUENCE [LARGE SCALE GENOMIC DNA]</scope>
    <source>
        <strain>ATCC 47054 / DSM 6125 / CFBP 8728 / NCIMB 11950 / KT2440</strain>
    </source>
</reference>
<gene>
    <name evidence="1" type="primary">coaE</name>
    <name type="ordered locus">PP_0631</name>
</gene>
<dbReference type="EC" id="2.7.1.24" evidence="1"/>
<dbReference type="EMBL" id="AE015451">
    <property type="protein sequence ID" value="AAN66256.1"/>
    <property type="molecule type" value="Genomic_DNA"/>
</dbReference>
<dbReference type="RefSeq" id="NP_742792.1">
    <property type="nucleotide sequence ID" value="NC_002947.4"/>
</dbReference>
<dbReference type="RefSeq" id="WP_004575721.1">
    <property type="nucleotide sequence ID" value="NZ_CP169744.1"/>
</dbReference>
<dbReference type="SMR" id="Q88Q65"/>
<dbReference type="STRING" id="160488.PP_0631"/>
<dbReference type="PaxDb" id="160488-PP_0631"/>
<dbReference type="GeneID" id="83677968"/>
<dbReference type="KEGG" id="ppu:PP_0631"/>
<dbReference type="PATRIC" id="fig|160488.4.peg.674"/>
<dbReference type="eggNOG" id="COG0237">
    <property type="taxonomic scope" value="Bacteria"/>
</dbReference>
<dbReference type="HOGENOM" id="CLU_057180_1_2_6"/>
<dbReference type="OrthoDB" id="9812943at2"/>
<dbReference type="PhylomeDB" id="Q88Q65"/>
<dbReference type="BioCyc" id="PPUT160488:G1G01-694-MONOMER"/>
<dbReference type="UniPathway" id="UPA00241">
    <property type="reaction ID" value="UER00356"/>
</dbReference>
<dbReference type="Proteomes" id="UP000000556">
    <property type="component" value="Chromosome"/>
</dbReference>
<dbReference type="GO" id="GO:0005737">
    <property type="term" value="C:cytoplasm"/>
    <property type="evidence" value="ECO:0007669"/>
    <property type="project" value="UniProtKB-SubCell"/>
</dbReference>
<dbReference type="GO" id="GO:0005524">
    <property type="term" value="F:ATP binding"/>
    <property type="evidence" value="ECO:0007669"/>
    <property type="project" value="UniProtKB-UniRule"/>
</dbReference>
<dbReference type="GO" id="GO:0004140">
    <property type="term" value="F:dephospho-CoA kinase activity"/>
    <property type="evidence" value="ECO:0007669"/>
    <property type="project" value="UniProtKB-UniRule"/>
</dbReference>
<dbReference type="GO" id="GO:0015937">
    <property type="term" value="P:coenzyme A biosynthetic process"/>
    <property type="evidence" value="ECO:0007669"/>
    <property type="project" value="UniProtKB-UniRule"/>
</dbReference>
<dbReference type="CDD" id="cd02022">
    <property type="entry name" value="DPCK"/>
    <property type="match status" value="1"/>
</dbReference>
<dbReference type="Gene3D" id="3.40.50.300">
    <property type="entry name" value="P-loop containing nucleotide triphosphate hydrolases"/>
    <property type="match status" value="1"/>
</dbReference>
<dbReference type="HAMAP" id="MF_00376">
    <property type="entry name" value="Dephospho_CoA_kinase"/>
    <property type="match status" value="1"/>
</dbReference>
<dbReference type="InterPro" id="IPR001977">
    <property type="entry name" value="Depp_CoAkinase"/>
</dbReference>
<dbReference type="InterPro" id="IPR027417">
    <property type="entry name" value="P-loop_NTPase"/>
</dbReference>
<dbReference type="NCBIfam" id="TIGR00152">
    <property type="entry name" value="dephospho-CoA kinase"/>
    <property type="match status" value="1"/>
</dbReference>
<dbReference type="PANTHER" id="PTHR10695:SF46">
    <property type="entry name" value="BIFUNCTIONAL COENZYME A SYNTHASE-RELATED"/>
    <property type="match status" value="1"/>
</dbReference>
<dbReference type="PANTHER" id="PTHR10695">
    <property type="entry name" value="DEPHOSPHO-COA KINASE-RELATED"/>
    <property type="match status" value="1"/>
</dbReference>
<dbReference type="Pfam" id="PF01121">
    <property type="entry name" value="CoaE"/>
    <property type="match status" value="1"/>
</dbReference>
<dbReference type="SUPFAM" id="SSF52540">
    <property type="entry name" value="P-loop containing nucleoside triphosphate hydrolases"/>
    <property type="match status" value="1"/>
</dbReference>
<dbReference type="PROSITE" id="PS51219">
    <property type="entry name" value="DPCK"/>
    <property type="match status" value="1"/>
</dbReference>
<feature type="chain" id="PRO_0000172983" description="Dephospho-CoA kinase">
    <location>
        <begin position="1"/>
        <end position="207"/>
    </location>
</feature>
<feature type="domain" description="DPCK" evidence="1">
    <location>
        <begin position="10"/>
        <end position="207"/>
    </location>
</feature>
<feature type="binding site" evidence="1">
    <location>
        <begin position="18"/>
        <end position="23"/>
    </location>
    <ligand>
        <name>ATP</name>
        <dbReference type="ChEBI" id="CHEBI:30616"/>
    </ligand>
</feature>
<evidence type="ECO:0000255" key="1">
    <source>
        <dbReference type="HAMAP-Rule" id="MF_00376"/>
    </source>
</evidence>
<keyword id="KW-0067">ATP-binding</keyword>
<keyword id="KW-0173">Coenzyme A biosynthesis</keyword>
<keyword id="KW-0963">Cytoplasm</keyword>
<keyword id="KW-0418">Kinase</keyword>
<keyword id="KW-0547">Nucleotide-binding</keyword>
<keyword id="KW-1185">Reference proteome</keyword>
<keyword id="KW-0808">Transferase</keyword>
<name>COAE_PSEPK</name>
<sequence length="207" mass="22652">MTTAAFTPWILGLTGGIGSGKSAAAERFVELGVHLVDADQAARWVVEPGRPALASIVERFGPGVLQGDGQLDRAALRQLIFADPAQRKWLEQLLHPLIGQEIFSYLAKAQSPYAVYVSPLLIESGQHHKTQRVLVIDAPQDLQIARTLARDNTSAEHVQAILQAQLAREDRLRHADDVVVNDGGLAALHEQIDRLHHFYLTLKGGQP</sequence>
<organism>
    <name type="scientific">Pseudomonas putida (strain ATCC 47054 / DSM 6125 / CFBP 8728 / NCIMB 11950 / KT2440)</name>
    <dbReference type="NCBI Taxonomy" id="160488"/>
    <lineage>
        <taxon>Bacteria</taxon>
        <taxon>Pseudomonadati</taxon>
        <taxon>Pseudomonadota</taxon>
        <taxon>Gammaproteobacteria</taxon>
        <taxon>Pseudomonadales</taxon>
        <taxon>Pseudomonadaceae</taxon>
        <taxon>Pseudomonas</taxon>
    </lineage>
</organism>
<accession>Q88Q65</accession>
<protein>
    <recommendedName>
        <fullName evidence="1">Dephospho-CoA kinase</fullName>
        <ecNumber evidence="1">2.7.1.24</ecNumber>
    </recommendedName>
    <alternativeName>
        <fullName evidence="1">Dephosphocoenzyme A kinase</fullName>
    </alternativeName>
</protein>
<comment type="function">
    <text evidence="1">Catalyzes the phosphorylation of the 3'-hydroxyl group of dephosphocoenzyme A to form coenzyme A.</text>
</comment>
<comment type="catalytic activity">
    <reaction evidence="1">
        <text>3'-dephospho-CoA + ATP = ADP + CoA + H(+)</text>
        <dbReference type="Rhea" id="RHEA:18245"/>
        <dbReference type="ChEBI" id="CHEBI:15378"/>
        <dbReference type="ChEBI" id="CHEBI:30616"/>
        <dbReference type="ChEBI" id="CHEBI:57287"/>
        <dbReference type="ChEBI" id="CHEBI:57328"/>
        <dbReference type="ChEBI" id="CHEBI:456216"/>
        <dbReference type="EC" id="2.7.1.24"/>
    </reaction>
</comment>
<comment type="pathway">
    <text evidence="1">Cofactor biosynthesis; coenzyme A biosynthesis; CoA from (R)-pantothenate: step 5/5.</text>
</comment>
<comment type="subcellular location">
    <subcellularLocation>
        <location evidence="1">Cytoplasm</location>
    </subcellularLocation>
</comment>
<comment type="similarity">
    <text evidence="1">Belongs to the CoaE family.</text>
</comment>
<proteinExistence type="inferred from homology"/>